<reference key="1">
    <citation type="journal article" date="2012" name="Proc. Natl. Acad. Sci. U.S.A.">
        <title>The transcriptional landscape and small RNAs of Salmonella enterica serovar Typhimurium.</title>
        <authorList>
            <person name="Kroger C."/>
            <person name="Dillon S.C."/>
            <person name="Cameron A.D."/>
            <person name="Papenfort K."/>
            <person name="Sivasankaran S.K."/>
            <person name="Hokamp K."/>
            <person name="Chao Y."/>
            <person name="Sittka A."/>
            <person name="Hebrard M."/>
            <person name="Handler K."/>
            <person name="Colgan A."/>
            <person name="Leekitcharoenphon P."/>
            <person name="Langridge G.C."/>
            <person name="Lohan A.J."/>
            <person name="Loftus B."/>
            <person name="Lucchini S."/>
            <person name="Ussery D.W."/>
            <person name="Dorman C.J."/>
            <person name="Thomson N.R."/>
            <person name="Vogel J."/>
            <person name="Hinton J.C."/>
        </authorList>
    </citation>
    <scope>NUCLEOTIDE SEQUENCE [LARGE SCALE GENOMIC DNA]</scope>
    <source>
        <strain>SL1344</strain>
    </source>
</reference>
<reference key="2">
    <citation type="journal article" date="1995" name="Mol. Microbiol.">
        <title>hilA is a novel ompR/toxR family member that activates the expression of Salmonella typhimurium invasion genes.</title>
        <authorList>
            <person name="Bajaj V."/>
            <person name="Hwang C."/>
            <person name="Lee C.A."/>
        </authorList>
    </citation>
    <scope>NUCLEOTIDE SEQUENCE [GENOMIC DNA] OF 1-74</scope>
    <source>
        <strain>SL1344</strain>
    </source>
</reference>
<sequence>MHYFFIIVIWLLSINTAWADCWLQAEKMFNIESELLYAIAQQESAMKPGAIGHNRDGSTDLGLMQINSFHMKRLKKMGISEKQLLQDPCISVIVGASILSDMMKIYGYSWEAVGAYNAGTSPKRSDIRKRYAKKIWENYRKLKGMSAEEKNKRLSIAANK</sequence>
<gene>
    <name type="primary">iagB</name>
    <name type="ordered locus">SL1344_2857</name>
</gene>
<comment type="similarity">
    <text evidence="2">Belongs to the IagB/IpgF/P19 family.</text>
</comment>
<protein>
    <recommendedName>
        <fullName>Invasion protein IagB</fullName>
    </recommendedName>
</protein>
<proteinExistence type="inferred from homology"/>
<feature type="signal peptide" evidence="1">
    <location>
        <begin position="1"/>
        <end position="19"/>
    </location>
</feature>
<feature type="chain" id="PRO_0000405426" description="Invasion protein IagB">
    <location>
        <begin position="20"/>
        <end position="160"/>
    </location>
</feature>
<organism>
    <name type="scientific">Salmonella typhimurium (strain SL1344)</name>
    <dbReference type="NCBI Taxonomy" id="216597"/>
    <lineage>
        <taxon>Bacteria</taxon>
        <taxon>Pseudomonadati</taxon>
        <taxon>Pseudomonadota</taxon>
        <taxon>Gammaproteobacteria</taxon>
        <taxon>Enterobacterales</taxon>
        <taxon>Enterobacteriaceae</taxon>
        <taxon>Salmonella</taxon>
    </lineage>
</organism>
<accession>E1WAC2</accession>
<accession>P43017</accession>
<name>IAGB_SALTS</name>
<dbReference type="EMBL" id="FQ312003">
    <property type="protein sequence ID" value="CBW18955.1"/>
    <property type="molecule type" value="Genomic_DNA"/>
</dbReference>
<dbReference type="EMBL" id="U25352">
    <property type="status" value="NOT_ANNOTATED_CDS"/>
    <property type="molecule type" value="Genomic_DNA"/>
</dbReference>
<dbReference type="RefSeq" id="WP_000558928.1">
    <property type="nucleotide sequence ID" value="NZ_QASL01000017.1"/>
</dbReference>
<dbReference type="SMR" id="E1WAC2"/>
<dbReference type="CAZy" id="GH23">
    <property type="family name" value="Glycoside Hydrolase Family 23"/>
</dbReference>
<dbReference type="KEGG" id="sey:SL1344_2857"/>
<dbReference type="PATRIC" id="fig|216597.6.peg.3178"/>
<dbReference type="HOGENOM" id="CLU_094905_1_0_6"/>
<dbReference type="BioCyc" id="SENT216597:SL1344_RS14895-MONOMER"/>
<dbReference type="Proteomes" id="UP000008962">
    <property type="component" value="Chromosome"/>
</dbReference>
<dbReference type="CDD" id="cd13400">
    <property type="entry name" value="LT_IagB-like"/>
    <property type="match status" value="1"/>
</dbReference>
<dbReference type="Gene3D" id="1.10.530.10">
    <property type="match status" value="1"/>
</dbReference>
<dbReference type="InterPro" id="IPR023346">
    <property type="entry name" value="Lysozyme-like_dom_sf"/>
</dbReference>
<dbReference type="InterPro" id="IPR008258">
    <property type="entry name" value="Transglycosylase_SLT_dom_1"/>
</dbReference>
<dbReference type="NCBIfam" id="NF011856">
    <property type="entry name" value="PRK15328.1"/>
    <property type="match status" value="1"/>
</dbReference>
<dbReference type="Pfam" id="PF01464">
    <property type="entry name" value="SLT"/>
    <property type="match status" value="1"/>
</dbReference>
<dbReference type="SUPFAM" id="SSF53955">
    <property type="entry name" value="Lysozyme-like"/>
    <property type="match status" value="1"/>
</dbReference>
<evidence type="ECO:0000255" key="1"/>
<evidence type="ECO:0000305" key="2"/>
<keyword id="KW-0732">Signal</keyword>
<keyword id="KW-0843">Virulence</keyword>